<feature type="chain" id="PRO_0000121617" description="tRNA-specific 2-thiouridylase MnmA">
    <location>
        <begin position="1"/>
        <end position="370"/>
    </location>
</feature>
<feature type="region of interest" description="Interaction with target base in tRNA" evidence="1">
    <location>
        <begin position="99"/>
        <end position="101"/>
    </location>
</feature>
<feature type="region of interest" description="Interaction with tRNA" evidence="1">
    <location>
        <begin position="151"/>
        <end position="153"/>
    </location>
</feature>
<feature type="region of interest" description="Interaction with tRNA" evidence="1">
    <location>
        <begin position="313"/>
        <end position="314"/>
    </location>
</feature>
<feature type="active site" description="Nucleophile" evidence="1">
    <location>
        <position position="104"/>
    </location>
</feature>
<feature type="active site" description="Cysteine persulfide intermediate" evidence="1">
    <location>
        <position position="201"/>
    </location>
</feature>
<feature type="binding site" evidence="1">
    <location>
        <begin position="11"/>
        <end position="18"/>
    </location>
    <ligand>
        <name>ATP</name>
        <dbReference type="ChEBI" id="CHEBI:30616"/>
    </ligand>
</feature>
<feature type="binding site" evidence="1">
    <location>
        <position position="37"/>
    </location>
    <ligand>
        <name>ATP</name>
        <dbReference type="ChEBI" id="CHEBI:30616"/>
    </ligand>
</feature>
<feature type="binding site" evidence="1">
    <location>
        <position position="129"/>
    </location>
    <ligand>
        <name>ATP</name>
        <dbReference type="ChEBI" id="CHEBI:30616"/>
    </ligand>
</feature>
<feature type="site" description="Interaction with tRNA" evidence="1">
    <location>
        <position position="130"/>
    </location>
</feature>
<feature type="site" description="Interaction with tRNA" evidence="1">
    <location>
        <position position="346"/>
    </location>
</feature>
<feature type="disulfide bond" description="Alternate" evidence="1">
    <location>
        <begin position="104"/>
        <end position="201"/>
    </location>
</feature>
<keyword id="KW-0067">ATP-binding</keyword>
<keyword id="KW-0963">Cytoplasm</keyword>
<keyword id="KW-1015">Disulfide bond</keyword>
<keyword id="KW-0547">Nucleotide-binding</keyword>
<keyword id="KW-1185">Reference proteome</keyword>
<keyword id="KW-0694">RNA-binding</keyword>
<keyword id="KW-0808">Transferase</keyword>
<keyword id="KW-0819">tRNA processing</keyword>
<keyword id="KW-0820">tRNA-binding</keyword>
<evidence type="ECO:0000255" key="1">
    <source>
        <dbReference type="HAMAP-Rule" id="MF_00144"/>
    </source>
</evidence>
<reference key="1">
    <citation type="journal article" date="2003" name="Proc. Natl. Acad. Sci. U.S.A.">
        <title>Reductive genome evolution in Buchnera aphidicola.</title>
        <authorList>
            <person name="van Ham R.C.H.J."/>
            <person name="Kamerbeek J."/>
            <person name="Palacios C."/>
            <person name="Rausell C."/>
            <person name="Abascal F."/>
            <person name="Bastolla U."/>
            <person name="Fernandez J.M."/>
            <person name="Jimenez L."/>
            <person name="Postigo M."/>
            <person name="Silva F.J."/>
            <person name="Tamames J."/>
            <person name="Viguera E."/>
            <person name="Latorre A."/>
            <person name="Valencia A."/>
            <person name="Moran F."/>
            <person name="Moya A."/>
        </authorList>
    </citation>
    <scope>NUCLEOTIDE SEQUENCE [LARGE SCALE GENOMIC DNA]</scope>
    <source>
        <strain>Bp</strain>
    </source>
</reference>
<organism>
    <name type="scientific">Buchnera aphidicola subsp. Baizongia pistaciae (strain Bp)</name>
    <dbReference type="NCBI Taxonomy" id="224915"/>
    <lineage>
        <taxon>Bacteria</taxon>
        <taxon>Pseudomonadati</taxon>
        <taxon>Pseudomonadota</taxon>
        <taxon>Gammaproteobacteria</taxon>
        <taxon>Enterobacterales</taxon>
        <taxon>Erwiniaceae</taxon>
        <taxon>Buchnera</taxon>
    </lineage>
</organism>
<sequence length="370" mass="42734">MYKLNKKVIVAMSGGVDSSVTAWILKKKGYHVEGLFMKNWEEHNSDSDMHCSSKKDLSDAQGVCNQLNIFLHKVNFSFEYWENVFQKFLFEYKMGRTPNPDVLCNKEIKFKIFFEYSIQDLQAHYIATGHYVQKRIFKNKYFLLRGLDATKDQSYFLYTINQKVLKQCLFPIGHLTKCEVRKIARRINLIVAKKKDSTGICFISPQNIKKFLNHYLPHKSGNIITTLGQKIGQHYGLIHYTIGQRRGLGIGGIKGFNNIPWYVVSKDITNNSLIVSQGMNNFYLMSIGLIANELHWINDINIQNSFFCTAKIRYRHIDIPCKIVMHKKKQIKVLFERPESSVAPGQSVVFYLSDLCLGGGIIKKRLPVLK</sequence>
<name>MNMA_BUCBP</name>
<gene>
    <name evidence="1" type="primary">mnmA</name>
    <name type="synonym">trmU</name>
    <name type="ordered locus">bbp_242</name>
</gene>
<comment type="function">
    <text evidence="1">Catalyzes the 2-thiolation of uridine at the wobble position (U34) of tRNA(Lys), tRNA(Glu) and tRNA(Gln), leading to the formation of s(2)U34, the first step of tRNA-mnm(5)s(2)U34 synthesis. Sulfur is provided by IscS, via a sulfur-relay system. Binds ATP and its substrate tRNAs.</text>
</comment>
<comment type="catalytic activity">
    <reaction evidence="1">
        <text>S-sulfanyl-L-cysteinyl-[protein] + uridine(34) in tRNA + AH2 + ATP = 2-thiouridine(34) in tRNA + L-cysteinyl-[protein] + A + AMP + diphosphate + H(+)</text>
        <dbReference type="Rhea" id="RHEA:47032"/>
        <dbReference type="Rhea" id="RHEA-COMP:10131"/>
        <dbReference type="Rhea" id="RHEA-COMP:11726"/>
        <dbReference type="Rhea" id="RHEA-COMP:11727"/>
        <dbReference type="Rhea" id="RHEA-COMP:11728"/>
        <dbReference type="ChEBI" id="CHEBI:13193"/>
        <dbReference type="ChEBI" id="CHEBI:15378"/>
        <dbReference type="ChEBI" id="CHEBI:17499"/>
        <dbReference type="ChEBI" id="CHEBI:29950"/>
        <dbReference type="ChEBI" id="CHEBI:30616"/>
        <dbReference type="ChEBI" id="CHEBI:33019"/>
        <dbReference type="ChEBI" id="CHEBI:61963"/>
        <dbReference type="ChEBI" id="CHEBI:65315"/>
        <dbReference type="ChEBI" id="CHEBI:87170"/>
        <dbReference type="ChEBI" id="CHEBI:456215"/>
        <dbReference type="EC" id="2.8.1.13"/>
    </reaction>
</comment>
<comment type="subunit">
    <text evidence="1">Interacts with TusE.</text>
</comment>
<comment type="subcellular location">
    <subcellularLocation>
        <location evidence="1">Cytoplasm</location>
    </subcellularLocation>
</comment>
<comment type="similarity">
    <text evidence="1">Belongs to the MnmA/TRMU family.</text>
</comment>
<accession>P59460</accession>
<dbReference type="EC" id="2.8.1.13" evidence="1"/>
<dbReference type="EMBL" id="AE016826">
    <property type="protein sequence ID" value="AAO26969.1"/>
    <property type="molecule type" value="Genomic_DNA"/>
</dbReference>
<dbReference type="RefSeq" id="WP_011091370.1">
    <property type="nucleotide sequence ID" value="NC_004545.1"/>
</dbReference>
<dbReference type="SMR" id="P59460"/>
<dbReference type="STRING" id="224915.bbp_242"/>
<dbReference type="KEGG" id="bab:bbp_242"/>
<dbReference type="eggNOG" id="COG0482">
    <property type="taxonomic scope" value="Bacteria"/>
</dbReference>
<dbReference type="HOGENOM" id="CLU_035188_1_0_6"/>
<dbReference type="OrthoDB" id="9800696at2"/>
<dbReference type="Proteomes" id="UP000000601">
    <property type="component" value="Chromosome"/>
</dbReference>
<dbReference type="GO" id="GO:0005737">
    <property type="term" value="C:cytoplasm"/>
    <property type="evidence" value="ECO:0007669"/>
    <property type="project" value="UniProtKB-SubCell"/>
</dbReference>
<dbReference type="GO" id="GO:0005524">
    <property type="term" value="F:ATP binding"/>
    <property type="evidence" value="ECO:0007669"/>
    <property type="project" value="UniProtKB-KW"/>
</dbReference>
<dbReference type="GO" id="GO:0000049">
    <property type="term" value="F:tRNA binding"/>
    <property type="evidence" value="ECO:0007669"/>
    <property type="project" value="UniProtKB-KW"/>
</dbReference>
<dbReference type="GO" id="GO:0103016">
    <property type="term" value="F:tRNA-uridine 2-sulfurtransferase activity"/>
    <property type="evidence" value="ECO:0007669"/>
    <property type="project" value="UniProtKB-EC"/>
</dbReference>
<dbReference type="GO" id="GO:0002143">
    <property type="term" value="P:tRNA wobble position uridine thiolation"/>
    <property type="evidence" value="ECO:0007669"/>
    <property type="project" value="TreeGrafter"/>
</dbReference>
<dbReference type="CDD" id="cd01998">
    <property type="entry name" value="MnmA_TRMU-like"/>
    <property type="match status" value="1"/>
</dbReference>
<dbReference type="FunFam" id="2.30.30.280:FF:000001">
    <property type="entry name" value="tRNA-specific 2-thiouridylase MnmA"/>
    <property type="match status" value="1"/>
</dbReference>
<dbReference type="FunFam" id="2.40.30.10:FF:000023">
    <property type="entry name" value="tRNA-specific 2-thiouridylase MnmA"/>
    <property type="match status" value="1"/>
</dbReference>
<dbReference type="FunFam" id="3.40.50.620:FF:000004">
    <property type="entry name" value="tRNA-specific 2-thiouridylase MnmA"/>
    <property type="match status" value="1"/>
</dbReference>
<dbReference type="Gene3D" id="2.30.30.280">
    <property type="entry name" value="Adenine nucleotide alpha hydrolases-like domains"/>
    <property type="match status" value="1"/>
</dbReference>
<dbReference type="Gene3D" id="3.40.50.620">
    <property type="entry name" value="HUPs"/>
    <property type="match status" value="1"/>
</dbReference>
<dbReference type="Gene3D" id="2.40.30.10">
    <property type="entry name" value="Translation factors"/>
    <property type="match status" value="1"/>
</dbReference>
<dbReference type="HAMAP" id="MF_00144">
    <property type="entry name" value="tRNA_thiouridyl_MnmA"/>
    <property type="match status" value="1"/>
</dbReference>
<dbReference type="InterPro" id="IPR004506">
    <property type="entry name" value="MnmA-like"/>
</dbReference>
<dbReference type="InterPro" id="IPR046885">
    <property type="entry name" value="MnmA-like_C"/>
</dbReference>
<dbReference type="InterPro" id="IPR046884">
    <property type="entry name" value="MnmA-like_central"/>
</dbReference>
<dbReference type="InterPro" id="IPR023382">
    <property type="entry name" value="MnmA-like_central_sf"/>
</dbReference>
<dbReference type="InterPro" id="IPR014729">
    <property type="entry name" value="Rossmann-like_a/b/a_fold"/>
</dbReference>
<dbReference type="NCBIfam" id="NF001138">
    <property type="entry name" value="PRK00143.1"/>
    <property type="match status" value="1"/>
</dbReference>
<dbReference type="NCBIfam" id="TIGR00420">
    <property type="entry name" value="trmU"/>
    <property type="match status" value="1"/>
</dbReference>
<dbReference type="PANTHER" id="PTHR11933:SF5">
    <property type="entry name" value="MITOCHONDRIAL TRNA-SPECIFIC 2-THIOURIDYLASE 1"/>
    <property type="match status" value="1"/>
</dbReference>
<dbReference type="PANTHER" id="PTHR11933">
    <property type="entry name" value="TRNA 5-METHYLAMINOMETHYL-2-THIOURIDYLATE -METHYLTRANSFERASE"/>
    <property type="match status" value="1"/>
</dbReference>
<dbReference type="Pfam" id="PF03054">
    <property type="entry name" value="tRNA_Me_trans"/>
    <property type="match status" value="1"/>
</dbReference>
<dbReference type="Pfam" id="PF20258">
    <property type="entry name" value="tRNA_Me_trans_C"/>
    <property type="match status" value="1"/>
</dbReference>
<dbReference type="Pfam" id="PF20259">
    <property type="entry name" value="tRNA_Me_trans_M"/>
    <property type="match status" value="1"/>
</dbReference>
<dbReference type="SUPFAM" id="SSF52402">
    <property type="entry name" value="Adenine nucleotide alpha hydrolases-like"/>
    <property type="match status" value="1"/>
</dbReference>
<proteinExistence type="inferred from homology"/>
<protein>
    <recommendedName>
        <fullName evidence="1">tRNA-specific 2-thiouridylase MnmA</fullName>
        <ecNumber evidence="1">2.8.1.13</ecNumber>
    </recommendedName>
</protein>